<reference evidence="5" key="1">
    <citation type="journal article" date="2012" name="Syst. Biol.">
        <title>Peptidomics-based phylogeny and biogeography of Mantophasmatodea (Hexapoda).</title>
        <authorList>
            <person name="Predel R."/>
            <person name="Neupert S."/>
            <person name="Huetteroth W."/>
            <person name="Kahnt J."/>
            <person name="Waidelich D."/>
            <person name="Roth S."/>
        </authorList>
    </citation>
    <scope>PROTEIN SEQUENCE</scope>
    <scope>AMIDATION AT LEU-7</scope>
    <source>
        <tissue evidence="3">Corpora cardiaca</tissue>
    </source>
</reference>
<sequence length="7" mass="821">DGYTPRL</sequence>
<dbReference type="GO" id="GO:0005576">
    <property type="term" value="C:extracellular region"/>
    <property type="evidence" value="ECO:0007669"/>
    <property type="project" value="UniProtKB-SubCell"/>
</dbReference>
<dbReference type="GO" id="GO:0007218">
    <property type="term" value="P:neuropeptide signaling pathway"/>
    <property type="evidence" value="ECO:0007669"/>
    <property type="project" value="UniProtKB-KW"/>
</dbReference>
<name>PPK1_AUSRA</name>
<comment type="function">
    <text evidence="1">Myoactive.</text>
</comment>
<comment type="subcellular location">
    <subcellularLocation>
        <location evidence="6">Secreted</location>
    </subcellularLocation>
</comment>
<comment type="similarity">
    <text evidence="2">Belongs to the pyrokinin family.</text>
</comment>
<protein>
    <recommendedName>
        <fullName evidence="4">Pyrokinin-1</fullName>
        <shortName evidence="4">PK-1</shortName>
    </recommendedName>
    <alternativeName>
        <fullName evidence="1">YXPRL-amide</fullName>
    </alternativeName>
</protein>
<accession>B3A0B1</accession>
<feature type="peptide" id="PRO_0000421575" description="Pyrokinin-1" evidence="3">
    <location>
        <begin position="1"/>
        <end position="7"/>
    </location>
</feature>
<feature type="modified residue" description="Leucine amide" evidence="3">
    <location>
        <position position="7"/>
    </location>
</feature>
<evidence type="ECO:0000250" key="1">
    <source>
        <dbReference type="UniProtKB" id="P82619"/>
    </source>
</evidence>
<evidence type="ECO:0000255" key="2"/>
<evidence type="ECO:0000269" key="3">
    <source>
    </source>
</evidence>
<evidence type="ECO:0000303" key="4">
    <source>
    </source>
</evidence>
<evidence type="ECO:0000305" key="5"/>
<evidence type="ECO:0000305" key="6">
    <source>
    </source>
</evidence>
<proteinExistence type="evidence at protein level"/>
<keyword id="KW-0027">Amidation</keyword>
<keyword id="KW-0903">Direct protein sequencing</keyword>
<keyword id="KW-0527">Neuropeptide</keyword>
<keyword id="KW-0964">Secreted</keyword>
<organism>
    <name type="scientific">Austrophasma rawsonvillense</name>
    <name type="common">Gladiator</name>
    <name type="synonym">Heel-walker</name>
    <dbReference type="NCBI Taxonomy" id="253137"/>
    <lineage>
        <taxon>Eukaryota</taxon>
        <taxon>Metazoa</taxon>
        <taxon>Ecdysozoa</taxon>
        <taxon>Arthropoda</taxon>
        <taxon>Hexapoda</taxon>
        <taxon>Insecta</taxon>
        <taxon>Pterygota</taxon>
        <taxon>Neoptera</taxon>
        <taxon>Polyneoptera</taxon>
        <taxon>Mantophasmatodea</taxon>
        <taxon>Austrophasmatidae</taxon>
        <taxon>Austrophasma</taxon>
    </lineage>
</organism>